<reference key="1">
    <citation type="submission" date="2005-06" db="EMBL/GenBank/DDBJ databases">
        <title>DNA sequences of macaque genes expressed in brain or testis and its evolutionary implications.</title>
        <authorList>
            <consortium name="International consortium for macaque cDNA sequencing and analysis"/>
        </authorList>
    </citation>
    <scope>NUCLEOTIDE SEQUENCE [LARGE SCALE MRNA]</scope>
    <source>
        <tissue>Temporal cortex</tissue>
    </source>
</reference>
<evidence type="ECO:0000250" key="1">
    <source>
        <dbReference type="UniProtKB" id="P28658"/>
    </source>
</evidence>
<evidence type="ECO:0000250" key="2">
    <source>
        <dbReference type="UniProtKB" id="Q9ER24"/>
    </source>
</evidence>
<evidence type="ECO:0000250" key="3">
    <source>
        <dbReference type="UniProtKB" id="Q9UBB4"/>
    </source>
</evidence>
<evidence type="ECO:0000305" key="4"/>
<sequence>MAAPRPPPARLSGIMVPAPIQDLEALRALTALFKEQRNRETAPRTIFQRVLDILKKSSHAVELACRDPSQVENLASSLQLITECFRCLRNACIECSVNQNSIRNLDTIGVAVDLILLFRELRVEQEALLTAFRCGLQFLGNIASRNEDSQSIVWVHAFPELFLSCLNHPDKKIVAYSSMILFTSLNHERMKELEENLNIAIDVIDAYQKHPESEWPVLIITDLFLKSPELVQAMFPKLNNQERVTLLDLMIAKITSDEPLTTDDIPVFLRHAELIASTFVDQCKTVLKLASEEPPDDEEALATIRLLDVLCEMTANTELLGYLQVFPGLLERVIDLLRVIHVTGKETTNIFSNCGCVRAEGDISNVAEGFKSHLIRLIGNLCYKNKDNQDKVNELDGIPLILDNCNISDSNPFLTQWVIYAIRNLTEDNSQNQDLIAKMEEQGLADASLLKKVGFEVEKKGEKLILKSTRDTPKP</sequence>
<keyword id="KW-0131">Cell cycle</keyword>
<keyword id="KW-0132">Cell division</keyword>
<keyword id="KW-0966">Cell projection</keyword>
<keyword id="KW-0963">Cytoplasm</keyword>
<keyword id="KW-0206">Cytoskeleton</keyword>
<keyword id="KW-0488">Methylation</keyword>
<keyword id="KW-0597">Phosphoprotein</keyword>
<keyword id="KW-1185">Reference proteome</keyword>
<keyword id="KW-0832">Ubl conjugation</keyword>
<feature type="chain" id="PRO_0000351655" description="Ataxin-10">
    <location>
        <begin position="1"/>
        <end position="475"/>
    </location>
</feature>
<feature type="modified residue" description="Omega-N-methylarginine" evidence="1">
    <location>
        <position position="10"/>
    </location>
</feature>
<feature type="modified residue" description="Phosphoserine" evidence="3">
    <location>
        <position position="12"/>
    </location>
</feature>
<feature type="modified residue" description="Phosphoserine" evidence="3">
    <location>
        <position position="77"/>
    </location>
</feature>
<feature type="modified residue" description="Phosphothreonine" evidence="3">
    <location>
        <position position="82"/>
    </location>
</feature>
<feature type="modified residue" description="Phosphoserine" evidence="3">
    <location>
        <position position="430"/>
    </location>
</feature>
<organism>
    <name type="scientific">Macaca fascicularis</name>
    <name type="common">Crab-eating macaque</name>
    <name type="synonym">Cynomolgus monkey</name>
    <dbReference type="NCBI Taxonomy" id="9541"/>
    <lineage>
        <taxon>Eukaryota</taxon>
        <taxon>Metazoa</taxon>
        <taxon>Chordata</taxon>
        <taxon>Craniata</taxon>
        <taxon>Vertebrata</taxon>
        <taxon>Euteleostomi</taxon>
        <taxon>Mammalia</taxon>
        <taxon>Eutheria</taxon>
        <taxon>Euarchontoglires</taxon>
        <taxon>Primates</taxon>
        <taxon>Haplorrhini</taxon>
        <taxon>Catarrhini</taxon>
        <taxon>Cercopithecidae</taxon>
        <taxon>Cercopithecinae</taxon>
        <taxon>Macaca</taxon>
    </lineage>
</organism>
<name>ATX10_MACFA</name>
<protein>
    <recommendedName>
        <fullName>Ataxin-10</fullName>
    </recommendedName>
    <alternativeName>
        <fullName>Spinocerebellar ataxia type 10 protein homolog</fullName>
    </alternativeName>
</protein>
<proteinExistence type="evidence at transcript level"/>
<comment type="function">
    <text evidence="1 2 3">May play a role in the regulation of cytokinesis (By similarity). May play a role in signaling by stimulating protein glycosylation. Induces neuritogenesis by activating the Ras-MAP kinase pathway and is necessary for the survival of cerebellar neurons (By similarity). Does not appear to play a major role in ciliogenesis (By similarity).</text>
</comment>
<comment type="subunit">
    <text evidence="2 3">Homooligomer (By similarity). Interacts with GNB2. Interacts with IQCB1 (By similarity). Interacts with OGT (By similarity).</text>
</comment>
<comment type="subcellular location">
    <subcellularLocation>
        <location evidence="3">Cytoplasm</location>
        <location evidence="3">Perinuclear region</location>
    </subcellularLocation>
    <subcellularLocation>
        <location evidence="3">Midbody</location>
    </subcellularLocation>
    <subcellularLocation>
        <location evidence="1">Cytoplasm</location>
        <location evidence="1">Cytoskeleton</location>
        <location evidence="1">Cilium basal body</location>
    </subcellularLocation>
    <subcellularLocation>
        <location evidence="1">Cytoplasm</location>
        <location evidence="1">Cytoskeleton</location>
        <location evidence="1">Microtubule organizing center</location>
        <location evidence="1">Centrosome</location>
        <location evidence="1">Centriole</location>
    </subcellularLocation>
    <text evidence="3">Localizes to the midbody during telophase.</text>
</comment>
<comment type="PTM">
    <text evidence="3">Polyubiquitinated.</text>
</comment>
<comment type="PTM">
    <text evidence="3">Phosphorylation at Ser-12 by AURKB promotes the association of ATXN10 with PLK1. Phosphorylation at Ser-77 and Thr-82 by PLK1 may play a role in the regulation of cytokinesis and may stimulate the proteasome-mediated degradation of ATXN10.</text>
</comment>
<comment type="similarity">
    <text evidence="4">Belongs to the ataxin-10 family.</text>
</comment>
<dbReference type="EMBL" id="AB169762">
    <property type="protein sequence ID" value="BAE01843.1"/>
    <property type="molecule type" value="mRNA"/>
</dbReference>
<dbReference type="RefSeq" id="NP_001270460.1">
    <property type="nucleotide sequence ID" value="NM_001283531.1"/>
</dbReference>
<dbReference type="RefSeq" id="XP_045219388.2">
    <property type="nucleotide sequence ID" value="XM_045363453.2"/>
</dbReference>
<dbReference type="STRING" id="9541.ENSMFAP00000015547"/>
<dbReference type="GeneID" id="101925440"/>
<dbReference type="VEuPathDB" id="HostDB:ENSMFAG00000030950"/>
<dbReference type="eggNOG" id="KOG2676">
    <property type="taxonomic scope" value="Eukaryota"/>
</dbReference>
<dbReference type="OMA" id="CAWESPP"/>
<dbReference type="Proteomes" id="UP000233100">
    <property type="component" value="Chromosome 10"/>
</dbReference>
<dbReference type="GO" id="GO:0005814">
    <property type="term" value="C:centriole"/>
    <property type="evidence" value="ECO:0000250"/>
    <property type="project" value="UniProtKB"/>
</dbReference>
<dbReference type="GO" id="GO:0036064">
    <property type="term" value="C:ciliary basal body"/>
    <property type="evidence" value="ECO:0000250"/>
    <property type="project" value="UniProtKB"/>
</dbReference>
<dbReference type="GO" id="GO:0005737">
    <property type="term" value="C:cytoplasm"/>
    <property type="evidence" value="ECO:0000250"/>
    <property type="project" value="UniProtKB"/>
</dbReference>
<dbReference type="GO" id="GO:0005829">
    <property type="term" value="C:cytosol"/>
    <property type="evidence" value="ECO:0007669"/>
    <property type="project" value="TreeGrafter"/>
</dbReference>
<dbReference type="GO" id="GO:0030496">
    <property type="term" value="C:midbody"/>
    <property type="evidence" value="ECO:0000250"/>
    <property type="project" value="UniProtKB"/>
</dbReference>
<dbReference type="GO" id="GO:0048471">
    <property type="term" value="C:perinuclear region of cytoplasm"/>
    <property type="evidence" value="ECO:0000250"/>
    <property type="project" value="UniProtKB"/>
</dbReference>
<dbReference type="GO" id="GO:0051301">
    <property type="term" value="P:cell division"/>
    <property type="evidence" value="ECO:0007669"/>
    <property type="project" value="UniProtKB-KW"/>
</dbReference>
<dbReference type="GO" id="GO:0031175">
    <property type="term" value="P:neuron projection development"/>
    <property type="evidence" value="ECO:0007669"/>
    <property type="project" value="TreeGrafter"/>
</dbReference>
<dbReference type="GO" id="GO:0032465">
    <property type="term" value="P:regulation of cytokinesis"/>
    <property type="evidence" value="ECO:0000250"/>
    <property type="project" value="UniProtKB"/>
</dbReference>
<dbReference type="FunFam" id="1.25.10.10:FF:000390">
    <property type="entry name" value="Ataxin-10"/>
    <property type="match status" value="1"/>
</dbReference>
<dbReference type="FunFam" id="1.25.10.10:FF:000427">
    <property type="entry name" value="Ataxin-10 isoform 1"/>
    <property type="match status" value="1"/>
</dbReference>
<dbReference type="Gene3D" id="1.25.10.10">
    <property type="entry name" value="Leucine-rich Repeat Variant"/>
    <property type="match status" value="2"/>
</dbReference>
<dbReference type="InterPro" id="IPR011989">
    <property type="entry name" value="ARM-like"/>
</dbReference>
<dbReference type="InterPro" id="IPR016024">
    <property type="entry name" value="ARM-type_fold"/>
</dbReference>
<dbReference type="InterPro" id="IPR051374">
    <property type="entry name" value="Ataxin-10/CTR86_families"/>
</dbReference>
<dbReference type="InterPro" id="IPR019156">
    <property type="entry name" value="Ataxin-10_domain"/>
</dbReference>
<dbReference type="PANTHER" id="PTHR13255">
    <property type="entry name" value="ATAXIN-10"/>
    <property type="match status" value="1"/>
</dbReference>
<dbReference type="PANTHER" id="PTHR13255:SF0">
    <property type="entry name" value="ATAXIN-10"/>
    <property type="match status" value="1"/>
</dbReference>
<dbReference type="Pfam" id="PF09759">
    <property type="entry name" value="Atx10homo_assoc"/>
    <property type="match status" value="1"/>
</dbReference>
<dbReference type="SUPFAM" id="SSF48371">
    <property type="entry name" value="ARM repeat"/>
    <property type="match status" value="1"/>
</dbReference>
<gene>
    <name type="primary">ATXN10</name>
    <name type="ORF">QtrA-11108</name>
</gene>
<accession>Q4R4Y2</accession>